<proteinExistence type="inferred from homology"/>
<evidence type="ECO:0000255" key="1">
    <source>
        <dbReference type="HAMAP-Rule" id="MF_00240"/>
    </source>
</evidence>
<protein>
    <recommendedName>
        <fullName evidence="1">Outer-membrane lipoprotein carrier protein</fullName>
    </recommendedName>
</protein>
<reference key="1">
    <citation type="journal article" date="2008" name="PLoS ONE">
        <title>A recalibrated molecular clock and independent origins for the cholera pandemic clones.</title>
        <authorList>
            <person name="Feng L."/>
            <person name="Reeves P.R."/>
            <person name="Lan R."/>
            <person name="Ren Y."/>
            <person name="Gao C."/>
            <person name="Zhou Z."/>
            <person name="Ren Y."/>
            <person name="Cheng J."/>
            <person name="Wang W."/>
            <person name="Wang J."/>
            <person name="Qian W."/>
            <person name="Li D."/>
            <person name="Wang L."/>
        </authorList>
    </citation>
    <scope>NUCLEOTIDE SEQUENCE [LARGE SCALE GENOMIC DNA]</scope>
    <source>
        <strain>M66-2</strain>
    </source>
</reference>
<dbReference type="EMBL" id="CP001233">
    <property type="protein sequence ID" value="ACP05380.1"/>
    <property type="molecule type" value="Genomic_DNA"/>
</dbReference>
<dbReference type="RefSeq" id="WP_001045827.1">
    <property type="nucleotide sequence ID" value="NC_012578.1"/>
</dbReference>
<dbReference type="SMR" id="C3LU04"/>
<dbReference type="GeneID" id="88785458"/>
<dbReference type="KEGG" id="vcm:VCM66_1063"/>
<dbReference type="HOGENOM" id="CLU_087560_1_1_6"/>
<dbReference type="Proteomes" id="UP000001217">
    <property type="component" value="Chromosome I"/>
</dbReference>
<dbReference type="GO" id="GO:0030288">
    <property type="term" value="C:outer membrane-bounded periplasmic space"/>
    <property type="evidence" value="ECO:0007669"/>
    <property type="project" value="TreeGrafter"/>
</dbReference>
<dbReference type="GO" id="GO:0044874">
    <property type="term" value="P:lipoprotein localization to outer membrane"/>
    <property type="evidence" value="ECO:0007669"/>
    <property type="project" value="UniProtKB-UniRule"/>
</dbReference>
<dbReference type="GO" id="GO:0042953">
    <property type="term" value="P:lipoprotein transport"/>
    <property type="evidence" value="ECO:0007669"/>
    <property type="project" value="InterPro"/>
</dbReference>
<dbReference type="CDD" id="cd16325">
    <property type="entry name" value="LolA"/>
    <property type="match status" value="1"/>
</dbReference>
<dbReference type="Gene3D" id="2.50.20.10">
    <property type="entry name" value="Lipoprotein localisation LolA/LolB/LppX"/>
    <property type="match status" value="1"/>
</dbReference>
<dbReference type="HAMAP" id="MF_00240">
    <property type="entry name" value="LolA"/>
    <property type="match status" value="1"/>
</dbReference>
<dbReference type="InterPro" id="IPR029046">
    <property type="entry name" value="LolA/LolB/LppX"/>
</dbReference>
<dbReference type="InterPro" id="IPR004564">
    <property type="entry name" value="OM_lipoprot_carrier_LolA-like"/>
</dbReference>
<dbReference type="InterPro" id="IPR018323">
    <property type="entry name" value="OM_lipoprot_carrier_LolA_Pbac"/>
</dbReference>
<dbReference type="NCBIfam" id="TIGR00547">
    <property type="entry name" value="lolA"/>
    <property type="match status" value="1"/>
</dbReference>
<dbReference type="PANTHER" id="PTHR35869">
    <property type="entry name" value="OUTER-MEMBRANE LIPOPROTEIN CARRIER PROTEIN"/>
    <property type="match status" value="1"/>
</dbReference>
<dbReference type="PANTHER" id="PTHR35869:SF1">
    <property type="entry name" value="OUTER-MEMBRANE LIPOPROTEIN CARRIER PROTEIN"/>
    <property type="match status" value="1"/>
</dbReference>
<dbReference type="Pfam" id="PF03548">
    <property type="entry name" value="LolA"/>
    <property type="match status" value="1"/>
</dbReference>
<dbReference type="SUPFAM" id="SSF89392">
    <property type="entry name" value="Prokaryotic lipoproteins and lipoprotein localization factors"/>
    <property type="match status" value="1"/>
</dbReference>
<comment type="function">
    <text evidence="1">Participates in the translocation of lipoproteins from the inner membrane to the outer membrane. Only forms a complex with a lipoprotein if the residue after the N-terminal Cys is not an aspartate (The Asp acts as a targeting signal to indicate that the lipoprotein should stay in the inner membrane).</text>
</comment>
<comment type="subunit">
    <text evidence="1">Monomer.</text>
</comment>
<comment type="subcellular location">
    <subcellularLocation>
        <location evidence="1">Periplasm</location>
    </subcellularLocation>
</comment>
<comment type="similarity">
    <text evidence="1">Belongs to the LolA family.</text>
</comment>
<accession>C3LU04</accession>
<gene>
    <name evidence="1" type="primary">lolA</name>
    <name type="ordered locus">VCM66_1063</name>
</gene>
<sequence>MNKWLALLFCSFSAIAAPKDTLSERLAMSEGFSATFNQQVLSPEGKVILTGNGKVDIARPSLFRWETETPDENLLVSDGTTLWHFDPFVEQVTLYRAEEALEQTPFVLLTRNKASDWDAYHVEEKGDVFTLTPTALDSNQGRFQITISEKGVVQGFKVIEQDGQQSEFTFSKVKQQKPNASVFNYKVPKGVEVDDQRN</sequence>
<name>LOLA_VIBCM</name>
<feature type="signal peptide" evidence="1">
    <location>
        <begin position="1"/>
        <end position="16"/>
    </location>
</feature>
<feature type="chain" id="PRO_1000125314" description="Outer-membrane lipoprotein carrier protein">
    <location>
        <begin position="17"/>
        <end position="198"/>
    </location>
</feature>
<keyword id="KW-0143">Chaperone</keyword>
<keyword id="KW-0574">Periplasm</keyword>
<keyword id="KW-0653">Protein transport</keyword>
<keyword id="KW-0732">Signal</keyword>
<keyword id="KW-0813">Transport</keyword>
<organism>
    <name type="scientific">Vibrio cholerae serotype O1 (strain M66-2)</name>
    <dbReference type="NCBI Taxonomy" id="579112"/>
    <lineage>
        <taxon>Bacteria</taxon>
        <taxon>Pseudomonadati</taxon>
        <taxon>Pseudomonadota</taxon>
        <taxon>Gammaproteobacteria</taxon>
        <taxon>Vibrionales</taxon>
        <taxon>Vibrionaceae</taxon>
        <taxon>Vibrio</taxon>
    </lineage>
</organism>